<organismHost>
    <name type="scientific">Homo sapiens</name>
    <name type="common">Human</name>
    <dbReference type="NCBI Taxonomy" id="9606"/>
</organismHost>
<feature type="chain" id="PRO_0000115349" description="Uncharacterized protein UL110">
    <location>
        <begin position="1"/>
        <end position="127"/>
    </location>
</feature>
<feature type="region of interest" description="Disordered" evidence="1">
    <location>
        <begin position="1"/>
        <end position="24"/>
    </location>
</feature>
<protein>
    <recommendedName>
        <fullName>Uncharacterized protein UL110</fullName>
    </recommendedName>
</protein>
<accession>P16830</accession>
<reference key="1">
    <citation type="journal article" date="1990" name="Curr. Top. Microbiol. Immunol.">
        <title>Analysis of the protein-coding content of the sequence of human cytomegalovirus strain AD169.</title>
        <authorList>
            <person name="Chee M.S."/>
            <person name="Bankier A.T."/>
            <person name="Beck S."/>
            <person name="Bohni R."/>
            <person name="Brown C.M."/>
            <person name="Cerny R."/>
            <person name="Horsnell T."/>
            <person name="Hutchison C.A. III"/>
            <person name="Kouzarides T."/>
            <person name="Martignetti J.A."/>
            <person name="Preddie E."/>
            <person name="Satchwell S.C."/>
            <person name="Tomlinson P."/>
            <person name="Weston K.M."/>
            <person name="Barrell B.G."/>
        </authorList>
    </citation>
    <scope>NUCLEOTIDE SEQUENCE [LARGE SCALE GENOMIC DNA]</scope>
</reference>
<dbReference type="EMBL" id="X17403">
    <property type="protein sequence ID" value="CAA35348.1"/>
    <property type="molecule type" value="Genomic_DNA"/>
</dbReference>
<dbReference type="PIR" id="S09877">
    <property type="entry name" value="S09877"/>
</dbReference>
<dbReference type="Proteomes" id="UP000008991">
    <property type="component" value="Segment"/>
</dbReference>
<gene>
    <name type="primary">UL110</name>
</gene>
<sequence>PLKTKPIDNNLPHRTGYNQASKQQTAPPCLLQRTVTTYVCRLPSRSGFWGSPPLPIIFSFVPDGRLSVRALVFSSMCAGFVIGEEDRDRIIMMIIIIHSPTIFILFCCSKEKRKKKQAATLTITLTS</sequence>
<organism>
    <name type="scientific">Human cytomegalovirus (strain AD169)</name>
    <name type="common">HHV-5</name>
    <name type="synonym">Human herpesvirus 5</name>
    <dbReference type="NCBI Taxonomy" id="10360"/>
    <lineage>
        <taxon>Viruses</taxon>
        <taxon>Duplodnaviria</taxon>
        <taxon>Heunggongvirae</taxon>
        <taxon>Peploviricota</taxon>
        <taxon>Herviviricetes</taxon>
        <taxon>Herpesvirales</taxon>
        <taxon>Orthoherpesviridae</taxon>
        <taxon>Betaherpesvirinae</taxon>
        <taxon>Cytomegalovirus</taxon>
        <taxon>Cytomegalovirus humanbeta5</taxon>
        <taxon>Human cytomegalovirus</taxon>
    </lineage>
</organism>
<proteinExistence type="predicted"/>
<name>UL110_HCMVA</name>
<evidence type="ECO:0000256" key="1">
    <source>
        <dbReference type="SAM" id="MobiDB-lite"/>
    </source>
</evidence>